<keyword id="KW-0131">Cell cycle</keyword>
<keyword id="KW-0132">Cell division</keyword>
<keyword id="KW-0342">GTP-binding</keyword>
<keyword id="KW-0460">Magnesium</keyword>
<keyword id="KW-0479">Metal-binding</keyword>
<keyword id="KW-0547">Nucleotide-binding</keyword>
<keyword id="KW-1185">Reference proteome</keyword>
<keyword id="KW-0717">Septation</keyword>
<protein>
    <recommendedName>
        <fullName evidence="1">Probable GTP-binding protein EngB</fullName>
    </recommendedName>
</protein>
<organism>
    <name type="scientific">Campylobacter lari (strain RM2100 / D67 / ATCC BAA-1060)</name>
    <dbReference type="NCBI Taxonomy" id="306263"/>
    <lineage>
        <taxon>Bacteria</taxon>
        <taxon>Pseudomonadati</taxon>
        <taxon>Campylobacterota</taxon>
        <taxon>Epsilonproteobacteria</taxon>
        <taxon>Campylobacterales</taxon>
        <taxon>Campylobacteraceae</taxon>
        <taxon>Campylobacter</taxon>
    </lineage>
</organism>
<accession>B9KG03</accession>
<gene>
    <name evidence="1" type="primary">engB</name>
    <name type="ordered locus">Cla_0659</name>
</gene>
<name>ENGB_CAMLR</name>
<comment type="function">
    <text evidence="1">Necessary for normal cell division and for the maintenance of normal septation.</text>
</comment>
<comment type="cofactor">
    <cofactor evidence="1">
        <name>Mg(2+)</name>
        <dbReference type="ChEBI" id="CHEBI:18420"/>
    </cofactor>
</comment>
<comment type="similarity">
    <text evidence="1">Belongs to the TRAFAC class TrmE-Era-EngA-EngB-Septin-like GTPase superfamily. EngB GTPase family.</text>
</comment>
<reference key="1">
    <citation type="journal article" date="2008" name="Foodborne Pathog. Dis.">
        <title>The complete genome sequence and analysis of the human pathogen Campylobacter lari.</title>
        <authorList>
            <person name="Miller W.G."/>
            <person name="Wang G."/>
            <person name="Binnewies T.T."/>
            <person name="Parker C.T."/>
        </authorList>
    </citation>
    <scope>NUCLEOTIDE SEQUENCE [LARGE SCALE GENOMIC DNA]</scope>
    <source>
        <strain>RM2100 / D67 / ATCC BAA-1060</strain>
    </source>
</reference>
<dbReference type="EMBL" id="CP000932">
    <property type="protein sequence ID" value="ACM63988.1"/>
    <property type="molecule type" value="Genomic_DNA"/>
</dbReference>
<dbReference type="RefSeq" id="WP_012661371.1">
    <property type="nucleotide sequence ID" value="NC_012039.1"/>
</dbReference>
<dbReference type="SMR" id="B9KG03"/>
<dbReference type="STRING" id="306263.Cla_0659"/>
<dbReference type="KEGG" id="cla:CLA_0659"/>
<dbReference type="PATRIC" id="fig|306263.5.peg.639"/>
<dbReference type="eggNOG" id="COG0218">
    <property type="taxonomic scope" value="Bacteria"/>
</dbReference>
<dbReference type="HOGENOM" id="CLU_033732_3_2_7"/>
<dbReference type="Proteomes" id="UP000007727">
    <property type="component" value="Chromosome"/>
</dbReference>
<dbReference type="GO" id="GO:0005829">
    <property type="term" value="C:cytosol"/>
    <property type="evidence" value="ECO:0007669"/>
    <property type="project" value="TreeGrafter"/>
</dbReference>
<dbReference type="GO" id="GO:0005525">
    <property type="term" value="F:GTP binding"/>
    <property type="evidence" value="ECO:0007669"/>
    <property type="project" value="UniProtKB-UniRule"/>
</dbReference>
<dbReference type="GO" id="GO:0046872">
    <property type="term" value="F:metal ion binding"/>
    <property type="evidence" value="ECO:0007669"/>
    <property type="project" value="UniProtKB-KW"/>
</dbReference>
<dbReference type="GO" id="GO:0000917">
    <property type="term" value="P:division septum assembly"/>
    <property type="evidence" value="ECO:0007669"/>
    <property type="project" value="UniProtKB-KW"/>
</dbReference>
<dbReference type="CDD" id="cd01876">
    <property type="entry name" value="YihA_EngB"/>
    <property type="match status" value="1"/>
</dbReference>
<dbReference type="Gene3D" id="3.40.50.300">
    <property type="entry name" value="P-loop containing nucleotide triphosphate hydrolases"/>
    <property type="match status" value="1"/>
</dbReference>
<dbReference type="HAMAP" id="MF_00321">
    <property type="entry name" value="GTPase_EngB"/>
    <property type="match status" value="1"/>
</dbReference>
<dbReference type="InterPro" id="IPR030393">
    <property type="entry name" value="G_ENGB_dom"/>
</dbReference>
<dbReference type="InterPro" id="IPR006073">
    <property type="entry name" value="GTP-bd"/>
</dbReference>
<dbReference type="InterPro" id="IPR019987">
    <property type="entry name" value="GTP-bd_ribosome_bio_YsxC"/>
</dbReference>
<dbReference type="InterPro" id="IPR027417">
    <property type="entry name" value="P-loop_NTPase"/>
</dbReference>
<dbReference type="NCBIfam" id="TIGR03598">
    <property type="entry name" value="GTPase_YsxC"/>
    <property type="match status" value="1"/>
</dbReference>
<dbReference type="PANTHER" id="PTHR11649:SF13">
    <property type="entry name" value="ENGB-TYPE G DOMAIN-CONTAINING PROTEIN"/>
    <property type="match status" value="1"/>
</dbReference>
<dbReference type="PANTHER" id="PTHR11649">
    <property type="entry name" value="MSS1/TRME-RELATED GTP-BINDING PROTEIN"/>
    <property type="match status" value="1"/>
</dbReference>
<dbReference type="Pfam" id="PF01926">
    <property type="entry name" value="MMR_HSR1"/>
    <property type="match status" value="1"/>
</dbReference>
<dbReference type="SUPFAM" id="SSF52540">
    <property type="entry name" value="P-loop containing nucleoside triphosphate hydrolases"/>
    <property type="match status" value="1"/>
</dbReference>
<dbReference type="PROSITE" id="PS51706">
    <property type="entry name" value="G_ENGB"/>
    <property type="match status" value="1"/>
</dbReference>
<evidence type="ECO:0000255" key="1">
    <source>
        <dbReference type="HAMAP-Rule" id="MF_00321"/>
    </source>
</evidence>
<sequence>MILNAKFLISASKIDEAPQPIYTEIAFLGRSNVGKSSLINTLCKNKNLAKSSSTPGKTQLINFFEVDCKKDEDKFKLIFIDLPGFGYAKVSKKTKAIWNKNLDEFLKERSSIKLFIHLIDSRHENLDIDLNLDLYLDSFIRADQKKITVFTKADKLNQSQKAKLLNANKNAILVSNLKKSGIDKLEQKIILESLGFNEE</sequence>
<proteinExistence type="inferred from homology"/>
<feature type="chain" id="PRO_1000133049" description="Probable GTP-binding protein EngB">
    <location>
        <begin position="1"/>
        <end position="199"/>
    </location>
</feature>
<feature type="domain" description="EngB-type G" evidence="1">
    <location>
        <begin position="21"/>
        <end position="195"/>
    </location>
</feature>
<feature type="binding site" evidence="1">
    <location>
        <begin position="29"/>
        <end position="36"/>
    </location>
    <ligand>
        <name>GTP</name>
        <dbReference type="ChEBI" id="CHEBI:37565"/>
    </ligand>
</feature>
<feature type="binding site" evidence="1">
    <location>
        <position position="36"/>
    </location>
    <ligand>
        <name>Mg(2+)</name>
        <dbReference type="ChEBI" id="CHEBI:18420"/>
    </ligand>
</feature>
<feature type="binding site" evidence="1">
    <location>
        <begin position="56"/>
        <end position="60"/>
    </location>
    <ligand>
        <name>GTP</name>
        <dbReference type="ChEBI" id="CHEBI:37565"/>
    </ligand>
</feature>
<feature type="binding site" evidence="1">
    <location>
        <position position="58"/>
    </location>
    <ligand>
        <name>Mg(2+)</name>
        <dbReference type="ChEBI" id="CHEBI:18420"/>
    </ligand>
</feature>
<feature type="binding site" evidence="1">
    <location>
        <begin position="81"/>
        <end position="84"/>
    </location>
    <ligand>
        <name>GTP</name>
        <dbReference type="ChEBI" id="CHEBI:37565"/>
    </ligand>
</feature>
<feature type="binding site" evidence="1">
    <location>
        <begin position="151"/>
        <end position="154"/>
    </location>
    <ligand>
        <name>GTP</name>
        <dbReference type="ChEBI" id="CHEBI:37565"/>
    </ligand>
</feature>
<feature type="binding site" evidence="1">
    <location>
        <begin position="174"/>
        <end position="176"/>
    </location>
    <ligand>
        <name>GTP</name>
        <dbReference type="ChEBI" id="CHEBI:37565"/>
    </ligand>
</feature>